<reference key="1">
    <citation type="journal article" date="2009" name="Science">
        <title>The dynamics and time scale of ongoing genomic erosion in symbiotic bacteria.</title>
        <authorList>
            <person name="Moran N.A."/>
            <person name="McLaughlin H.J."/>
            <person name="Sorek R."/>
        </authorList>
    </citation>
    <scope>NUCLEOTIDE SEQUENCE [LARGE SCALE GENOMIC DNA]</scope>
    <source>
        <strain>Tuc7</strain>
    </source>
</reference>
<name>TUSA_BUCAT</name>
<proteinExistence type="inferred from homology"/>
<comment type="function">
    <text evidence="1">Sulfur carrier protein involved in sulfur trafficking in the cell. Part of a sulfur-relay system required for 2-thiolation during synthesis of 2-thiouridine of the modified wobble base 5-methylaminomethyl-2-thiouridine (mnm(5)s(2)U) in tRNA. Interacts with IscS and stimulates its cysteine desulfurase activity. Accepts an activated sulfur from IscS, which is then transferred to TusD, and thus determines the direction of sulfur flow from IscS to 2-thiouridine formation. Also appears to be involved in sulfur transfer for the biosynthesis of molybdopterin.</text>
</comment>
<comment type="pathway">
    <text evidence="1">tRNA modification.</text>
</comment>
<comment type="subunit">
    <text evidence="1">Interacts with IscS.</text>
</comment>
<comment type="subcellular location">
    <subcellularLocation>
        <location evidence="1">Cytoplasm</location>
    </subcellularLocation>
</comment>
<comment type="similarity">
    <text evidence="1">Belongs to the sulfur carrier protein TusA family.</text>
</comment>
<feature type="chain" id="PRO_1000199909" description="Sulfur carrier protein TusA">
    <location>
        <begin position="1"/>
        <end position="76"/>
    </location>
</feature>
<feature type="active site" description="Cysteine persulfide intermediate" evidence="1">
    <location>
        <position position="14"/>
    </location>
</feature>
<sequence>MKKNIILNLIGLRCPEPIMIIRKTIRNMKDNEKILILSDDPATKRDIPNFCYFMEHKLLKNEIKVKPYRYLLKKGL</sequence>
<dbReference type="EMBL" id="CP001158">
    <property type="protein sequence ID" value="ACL30242.1"/>
    <property type="molecule type" value="Genomic_DNA"/>
</dbReference>
<dbReference type="RefSeq" id="WP_012619553.1">
    <property type="nucleotide sequence ID" value="NC_011834.1"/>
</dbReference>
<dbReference type="SMR" id="B8D7X7"/>
<dbReference type="KEGG" id="bau:BUAPTUC7_441"/>
<dbReference type="HOGENOM" id="CLU_165255_5_1_6"/>
<dbReference type="GO" id="GO:0005737">
    <property type="term" value="C:cytoplasm"/>
    <property type="evidence" value="ECO:0007669"/>
    <property type="project" value="UniProtKB-SubCell"/>
</dbReference>
<dbReference type="GO" id="GO:0097163">
    <property type="term" value="F:sulfur carrier activity"/>
    <property type="evidence" value="ECO:0007669"/>
    <property type="project" value="UniProtKB-UniRule"/>
</dbReference>
<dbReference type="GO" id="GO:0002143">
    <property type="term" value="P:tRNA wobble position uridine thiolation"/>
    <property type="evidence" value="ECO:0007669"/>
    <property type="project" value="InterPro"/>
</dbReference>
<dbReference type="Gene3D" id="3.30.110.40">
    <property type="entry name" value="TusA-like domain"/>
    <property type="match status" value="1"/>
</dbReference>
<dbReference type="HAMAP" id="MF_00413">
    <property type="entry name" value="Thiourid_synth_A"/>
    <property type="match status" value="1"/>
</dbReference>
<dbReference type="InterPro" id="IPR022931">
    <property type="entry name" value="Sulphur_carrier_TusA"/>
</dbReference>
<dbReference type="InterPro" id="IPR001455">
    <property type="entry name" value="TusA-like"/>
</dbReference>
<dbReference type="InterPro" id="IPR036868">
    <property type="entry name" value="TusA-like_sf"/>
</dbReference>
<dbReference type="NCBIfam" id="NF001423">
    <property type="entry name" value="PRK00299.1"/>
    <property type="match status" value="1"/>
</dbReference>
<dbReference type="PANTHER" id="PTHR33279:SF2">
    <property type="entry name" value="SULFUR CARRIER PROTEIN TUSA"/>
    <property type="match status" value="1"/>
</dbReference>
<dbReference type="PANTHER" id="PTHR33279">
    <property type="entry name" value="SULFUR CARRIER PROTEIN YEDF-RELATED"/>
    <property type="match status" value="1"/>
</dbReference>
<dbReference type="Pfam" id="PF01206">
    <property type="entry name" value="TusA"/>
    <property type="match status" value="1"/>
</dbReference>
<dbReference type="SUPFAM" id="SSF64307">
    <property type="entry name" value="SirA-like"/>
    <property type="match status" value="1"/>
</dbReference>
<dbReference type="PROSITE" id="PS01148">
    <property type="entry name" value="UPF0033"/>
    <property type="match status" value="1"/>
</dbReference>
<protein>
    <recommendedName>
        <fullName evidence="1">Sulfur carrier protein TusA</fullName>
    </recommendedName>
    <alternativeName>
        <fullName evidence="1">Sulfur mediator TusA</fullName>
    </alternativeName>
    <alternativeName>
        <fullName evidence="1">Sulfur transfer protein TusA</fullName>
    </alternativeName>
    <alternativeName>
        <fullName evidence="1">tRNA 2-thiouridine synthesizing protein A</fullName>
    </alternativeName>
</protein>
<evidence type="ECO:0000255" key="1">
    <source>
        <dbReference type="HAMAP-Rule" id="MF_00413"/>
    </source>
</evidence>
<organism>
    <name type="scientific">Buchnera aphidicola subsp. Acyrthosiphon pisum (strain Tuc7)</name>
    <dbReference type="NCBI Taxonomy" id="561501"/>
    <lineage>
        <taxon>Bacteria</taxon>
        <taxon>Pseudomonadati</taxon>
        <taxon>Pseudomonadota</taxon>
        <taxon>Gammaproteobacteria</taxon>
        <taxon>Enterobacterales</taxon>
        <taxon>Erwiniaceae</taxon>
        <taxon>Buchnera</taxon>
    </lineage>
</organism>
<accession>B8D7X7</accession>
<gene>
    <name evidence="1" type="primary">tusA</name>
    <name type="ordered locus">BUAPTUC7_441</name>
</gene>
<keyword id="KW-0963">Cytoplasm</keyword>
<keyword id="KW-0819">tRNA processing</keyword>